<comment type="function">
    <text evidence="3">May play a role in chromosome segregation through establishment of sister chromatid cohesion.</text>
</comment>
<comment type="interaction">
    <interactant intactId="EBI-24704">
        <id>P38829</id>
    </interactant>
    <interactant intactId="EBI-32145">
        <id>Q05583</id>
        <label>CIA1</label>
    </interactant>
    <organismsDiffer>false</organismsDiffer>
    <experiments>7</experiments>
</comment>
<comment type="interaction">
    <interactant intactId="EBI-24704">
        <id>P38829</id>
    </interactant>
    <interactant intactId="EBI-11492">
        <id>P40469</id>
        <label>MET18</label>
    </interactant>
    <organismsDiffer>false</organismsDiffer>
    <experiments>7</experiments>
</comment>
<comment type="miscellaneous">
    <text evidence="2">Present with 1800 molecules/cell in log phase SD medium.</text>
</comment>
<comment type="similarity">
    <text evidence="4">Belongs to the MIP18 family.</text>
</comment>
<protein>
    <recommendedName>
        <fullName>MIP18 family protein YHR122W</fullName>
    </recommendedName>
</protein>
<gene>
    <name type="ordered locus">YHR122W</name>
</gene>
<name>YHS2_YEAST</name>
<dbReference type="EMBL" id="U10398">
    <property type="protein sequence ID" value="AAB68410.1"/>
    <property type="molecule type" value="Genomic_DNA"/>
</dbReference>
<dbReference type="EMBL" id="BK006934">
    <property type="protein sequence ID" value="DAA06816.1"/>
    <property type="molecule type" value="Genomic_DNA"/>
</dbReference>
<dbReference type="PIR" id="S48966">
    <property type="entry name" value="S48966"/>
</dbReference>
<dbReference type="SMR" id="P38829"/>
<dbReference type="BioGRID" id="36555">
    <property type="interactions" value="200"/>
</dbReference>
<dbReference type="ComplexPortal" id="CPX-2321">
    <property type="entry name" value="CIA targeting complex"/>
</dbReference>
<dbReference type="DIP" id="DIP-1837N"/>
<dbReference type="FunCoup" id="P38829">
    <property type="interactions" value="491"/>
</dbReference>
<dbReference type="IntAct" id="P38829">
    <property type="interactions" value="117"/>
</dbReference>
<dbReference type="MINT" id="P38829"/>
<dbReference type="STRING" id="4932.YHR122W"/>
<dbReference type="iPTMnet" id="P38829"/>
<dbReference type="PaxDb" id="4932-YHR122W"/>
<dbReference type="PeptideAtlas" id="P38829"/>
<dbReference type="EnsemblFungi" id="YHR122W_mRNA">
    <property type="protein sequence ID" value="YHR122W"/>
    <property type="gene ID" value="YHR122W"/>
</dbReference>
<dbReference type="KEGG" id="sce:YHR122W"/>
<dbReference type="AGR" id="SGD:S000001164"/>
<dbReference type="SGD" id="S000001164">
    <property type="gene designation" value="YHR122W"/>
</dbReference>
<dbReference type="VEuPathDB" id="FungiDB:YHR122W"/>
<dbReference type="eggNOG" id="KOG3381">
    <property type="taxonomic scope" value="Eukaryota"/>
</dbReference>
<dbReference type="GeneTree" id="ENSGT00390000017697"/>
<dbReference type="HOGENOM" id="CLU_075876_1_1_1"/>
<dbReference type="InParanoid" id="P38829"/>
<dbReference type="OMA" id="YDMIAHI"/>
<dbReference type="OrthoDB" id="2746at2759"/>
<dbReference type="BioCyc" id="YEAST:G3O-31164-MONOMER"/>
<dbReference type="BioGRID-ORCS" id="856522">
    <property type="hits" value="2 hits in 10 CRISPR screens"/>
</dbReference>
<dbReference type="PRO" id="PR:P38829"/>
<dbReference type="Proteomes" id="UP000002311">
    <property type="component" value="Chromosome VIII"/>
</dbReference>
<dbReference type="RNAct" id="P38829">
    <property type="molecule type" value="protein"/>
</dbReference>
<dbReference type="GO" id="GO:0005737">
    <property type="term" value="C:cytoplasm"/>
    <property type="evidence" value="ECO:0007005"/>
    <property type="project" value="SGD"/>
</dbReference>
<dbReference type="GO" id="GO:0005829">
    <property type="term" value="C:cytosol"/>
    <property type="evidence" value="ECO:0000304"/>
    <property type="project" value="Reactome"/>
</dbReference>
<dbReference type="GO" id="GO:0097361">
    <property type="term" value="C:cytosolic [4Fe-4S] assembly targeting complex"/>
    <property type="evidence" value="ECO:0000314"/>
    <property type="project" value="SGD"/>
</dbReference>
<dbReference type="GO" id="GO:0005634">
    <property type="term" value="C:nucleus"/>
    <property type="evidence" value="ECO:0007005"/>
    <property type="project" value="SGD"/>
</dbReference>
<dbReference type="GO" id="GO:0007059">
    <property type="term" value="P:chromosome segregation"/>
    <property type="evidence" value="ECO:0007669"/>
    <property type="project" value="UniProtKB-KW"/>
</dbReference>
<dbReference type="GO" id="GO:0016226">
    <property type="term" value="P:iron-sulfur cluster assembly"/>
    <property type="evidence" value="ECO:0000315"/>
    <property type="project" value="SGD"/>
</dbReference>
<dbReference type="GO" id="GO:0051604">
    <property type="term" value="P:protein maturation"/>
    <property type="evidence" value="ECO:0007669"/>
    <property type="project" value="InterPro"/>
</dbReference>
<dbReference type="FunFam" id="3.30.300.130:FF:000007">
    <property type="entry name" value="Cytoplasmic protein required for cell viability"/>
    <property type="match status" value="1"/>
</dbReference>
<dbReference type="Gene3D" id="6.10.250.1280">
    <property type="match status" value="1"/>
</dbReference>
<dbReference type="Gene3D" id="3.30.300.130">
    <property type="entry name" value="Fe-S cluster assembly (FSCA)"/>
    <property type="match status" value="1"/>
</dbReference>
<dbReference type="InterPro" id="IPR034904">
    <property type="entry name" value="FSCA_dom_sf"/>
</dbReference>
<dbReference type="InterPro" id="IPR039796">
    <property type="entry name" value="MIP18"/>
</dbReference>
<dbReference type="InterPro" id="IPR002744">
    <property type="entry name" value="MIP18-like"/>
</dbReference>
<dbReference type="PANTHER" id="PTHR12377:SF0">
    <property type="entry name" value="CYTOSOLIC IRON-SULFUR ASSEMBLY COMPONENT 2B"/>
    <property type="match status" value="1"/>
</dbReference>
<dbReference type="PANTHER" id="PTHR12377">
    <property type="entry name" value="CYTOSOLIC IRON-SULFUR ASSEMBLY COMPONENT 2B-RELATED"/>
    <property type="match status" value="1"/>
</dbReference>
<dbReference type="Pfam" id="PF01883">
    <property type="entry name" value="FeS_assembly_P"/>
    <property type="match status" value="1"/>
</dbReference>
<dbReference type="SUPFAM" id="SSF117916">
    <property type="entry name" value="Fe-S cluster assembly (FSCA) domain-like"/>
    <property type="match status" value="1"/>
</dbReference>
<keyword id="KW-0007">Acetylation</keyword>
<keyword id="KW-0159">Chromosome partition</keyword>
<keyword id="KW-1185">Reference proteome</keyword>
<organism>
    <name type="scientific">Saccharomyces cerevisiae (strain ATCC 204508 / S288c)</name>
    <name type="common">Baker's yeast</name>
    <dbReference type="NCBI Taxonomy" id="559292"/>
    <lineage>
        <taxon>Eukaryota</taxon>
        <taxon>Fungi</taxon>
        <taxon>Dikarya</taxon>
        <taxon>Ascomycota</taxon>
        <taxon>Saccharomycotina</taxon>
        <taxon>Saccharomycetes</taxon>
        <taxon>Saccharomycetales</taxon>
        <taxon>Saccharomycetaceae</taxon>
        <taxon>Saccharomyces</taxon>
    </lineage>
</organism>
<reference key="1">
    <citation type="journal article" date="1994" name="Science">
        <title>Complete nucleotide sequence of Saccharomyces cerevisiae chromosome VIII.</title>
        <authorList>
            <person name="Johnston M."/>
            <person name="Andrews S."/>
            <person name="Brinkman R."/>
            <person name="Cooper J."/>
            <person name="Ding H."/>
            <person name="Dover J."/>
            <person name="Du Z."/>
            <person name="Favello A."/>
            <person name="Fulton L."/>
            <person name="Gattung S."/>
            <person name="Geisel C."/>
            <person name="Kirsten J."/>
            <person name="Kucaba T."/>
            <person name="Hillier L.W."/>
            <person name="Jier M."/>
            <person name="Johnston L."/>
            <person name="Langston Y."/>
            <person name="Latreille P."/>
            <person name="Louis E.J."/>
            <person name="Macri C."/>
            <person name="Mardis E."/>
            <person name="Menezes S."/>
            <person name="Mouser L."/>
            <person name="Nhan M."/>
            <person name="Rifkin L."/>
            <person name="Riles L."/>
            <person name="St Peter H."/>
            <person name="Trevaskis E."/>
            <person name="Vaughan K."/>
            <person name="Vignati D."/>
            <person name="Wilcox L."/>
            <person name="Wohldman P."/>
            <person name="Waterston R."/>
            <person name="Wilson R."/>
            <person name="Vaudin M."/>
        </authorList>
    </citation>
    <scope>NUCLEOTIDE SEQUENCE [LARGE SCALE GENOMIC DNA]</scope>
    <source>
        <strain>ATCC 204508 / S288c</strain>
    </source>
</reference>
<reference key="2">
    <citation type="journal article" date="2008" name="Mol. Cell">
        <title>Toward a comprehensive temperature-sensitive mutant repository of the essential genes of Saccharomyces cerevisiae.</title>
        <authorList>
            <person name="Ben-Aroya S."/>
            <person name="Coombes C."/>
            <person name="Kwok T."/>
            <person name="O'Donnell K.A."/>
            <person name="Boeke J.D."/>
            <person name="Hieter P."/>
        </authorList>
    </citation>
    <scope>FUNCTION</scope>
</reference>
<reference key="3">
    <citation type="journal article" date="2014" name="G3 (Bethesda)">
        <title>The reference genome sequence of Saccharomyces cerevisiae: Then and now.</title>
        <authorList>
            <person name="Engel S.R."/>
            <person name="Dietrich F.S."/>
            <person name="Fisk D.G."/>
            <person name="Binkley G."/>
            <person name="Balakrishnan R."/>
            <person name="Costanzo M.C."/>
            <person name="Dwight S.S."/>
            <person name="Hitz B.C."/>
            <person name="Karra K."/>
            <person name="Nash R.S."/>
            <person name="Weng S."/>
            <person name="Wong E.D."/>
            <person name="Lloyd P."/>
            <person name="Skrzypek M.S."/>
            <person name="Miyasato S.R."/>
            <person name="Simison M."/>
            <person name="Cherry J.M."/>
        </authorList>
    </citation>
    <scope>GENOME REANNOTATION</scope>
    <source>
        <strain>ATCC 204508 / S288c</strain>
    </source>
</reference>
<reference key="4">
    <citation type="journal article" date="2003" name="Nature">
        <title>Global analysis of protein expression in yeast.</title>
        <authorList>
            <person name="Ghaemmaghami S."/>
            <person name="Huh W.-K."/>
            <person name="Bower K."/>
            <person name="Howson R.W."/>
            <person name="Belle A."/>
            <person name="Dephoure N."/>
            <person name="O'Shea E.K."/>
            <person name="Weissman J.S."/>
        </authorList>
    </citation>
    <scope>LEVEL OF PROTEIN EXPRESSION [LARGE SCALE ANALYSIS]</scope>
</reference>
<reference key="5">
    <citation type="journal article" date="2012" name="Proc. Natl. Acad. Sci. U.S.A.">
        <title>N-terminal acetylome analyses and functional insights of the N-terminal acetyltransferase NatB.</title>
        <authorList>
            <person name="Van Damme P."/>
            <person name="Lasa M."/>
            <person name="Polevoda B."/>
            <person name="Gazquez C."/>
            <person name="Elosegui-Artola A."/>
            <person name="Kim D.S."/>
            <person name="De Juan-Pardo E."/>
            <person name="Demeyer K."/>
            <person name="Hole K."/>
            <person name="Larrea E."/>
            <person name="Timmerman E."/>
            <person name="Prieto J."/>
            <person name="Arnesen T."/>
            <person name="Sherman F."/>
            <person name="Gevaert K."/>
            <person name="Aldabe R."/>
        </authorList>
    </citation>
    <scope>ACETYLATION [LARGE SCALE ANALYSIS] AT SER-2</scope>
    <scope>CLEAVAGE OF INITIATOR METHIONINE [LARGE SCALE ANALYSIS]</scope>
    <scope>IDENTIFICATION BY MASS SPECTROMETRY [LARGE SCALE ANALYSIS]</scope>
</reference>
<accession>P38829</accession>
<accession>D3DL72</accession>
<proteinExistence type="evidence at protein level"/>
<evidence type="ECO:0000256" key="1">
    <source>
        <dbReference type="SAM" id="MobiDB-lite"/>
    </source>
</evidence>
<evidence type="ECO:0000269" key="2">
    <source>
    </source>
</evidence>
<evidence type="ECO:0000269" key="3">
    <source>
    </source>
</evidence>
<evidence type="ECO:0000305" key="4"/>
<evidence type="ECO:0007744" key="5">
    <source>
    </source>
</evidence>
<feature type="initiator methionine" description="Removed" evidence="5">
    <location>
        <position position="1"/>
    </location>
</feature>
<feature type="chain" id="PRO_0000212699" description="MIP18 family protein YHR122W">
    <location>
        <begin position="2"/>
        <end position="231"/>
    </location>
</feature>
<feature type="region of interest" description="Disordered" evidence="1">
    <location>
        <begin position="1"/>
        <end position="26"/>
    </location>
</feature>
<feature type="region of interest" description="Disordered" evidence="1">
    <location>
        <begin position="75"/>
        <end position="100"/>
    </location>
</feature>
<feature type="compositionally biased region" description="Acidic residues" evidence="1">
    <location>
        <begin position="76"/>
        <end position="90"/>
    </location>
</feature>
<feature type="modified residue" description="N-acetylserine" evidence="5">
    <location>
        <position position="2"/>
    </location>
</feature>
<sequence length="231" mass="25675">MSEFLNENPDILEENQLPTRKEDSTKDLLLGGFSNEATLERRSLLLKIDHSLKSQVLQDIEVLDKLLSIRIPPELTSDEDSLPAESEDESVAGGGKEEEEPDLIDAQEIYDLIAHISDPEHPLSLGQLSVVNLEDIDVHDSGNQNEMAEVVIKITPTITHCSLATLIGLGIRVRLERSLPPRFRITILLKKGTHDSENQVNKQLNDKERVAAACENEQLLGVVSKMLVTCK</sequence>